<dbReference type="EC" id="3.4.17.2" evidence="7"/>
<dbReference type="PIR" id="A93797">
    <property type="entry name" value="CPBOB"/>
</dbReference>
<dbReference type="PDB" id="1CPB">
    <property type="method" value="X-ray"/>
    <property type="resolution" value="2.80 A"/>
    <property type="chains" value="A=111-192, B=200-416"/>
</dbReference>
<dbReference type="PDBsum" id="1CPB"/>
<dbReference type="SMR" id="P00732"/>
<dbReference type="FunCoup" id="P00732">
    <property type="interactions" value="82"/>
</dbReference>
<dbReference type="STRING" id="9913.ENSBTAP00000000580"/>
<dbReference type="MEROPS" id="M14.003"/>
<dbReference type="PaxDb" id="9913-ENSBTAP00000000580"/>
<dbReference type="Ensembl" id="ENSBTAT00000000580.6">
    <property type="protein sequence ID" value="ENSBTAP00000000580.4"/>
    <property type="gene ID" value="ENSBTAG00000000456.6"/>
</dbReference>
<dbReference type="VEuPathDB" id="HostDB:ENSBTAG00000000456"/>
<dbReference type="VGNC" id="VGNC:27645">
    <property type="gene designation" value="CPB1"/>
</dbReference>
<dbReference type="eggNOG" id="KOG2650">
    <property type="taxonomic scope" value="Eukaryota"/>
</dbReference>
<dbReference type="GeneTree" id="ENSGT00940000157819"/>
<dbReference type="HOGENOM" id="CLU_019326_0_0_1"/>
<dbReference type="InParanoid" id="P00732"/>
<dbReference type="OMA" id="TKYRHGT"/>
<dbReference type="OrthoDB" id="3626597at2759"/>
<dbReference type="TreeFam" id="TF317197"/>
<dbReference type="Reactome" id="R-BTA-2022377">
    <property type="pathway name" value="Metabolism of Angiotensinogen to Angiotensins"/>
</dbReference>
<dbReference type="EvolutionaryTrace" id="P00732"/>
<dbReference type="Proteomes" id="UP000009136">
    <property type="component" value="Chromosome 1"/>
</dbReference>
<dbReference type="Bgee" id="ENSBTAG00000000456">
    <property type="expression patterns" value="Expressed in urinary bladder and 31 other cell types or tissues"/>
</dbReference>
<dbReference type="GO" id="GO:0031410">
    <property type="term" value="C:cytoplasmic vesicle"/>
    <property type="evidence" value="ECO:0007669"/>
    <property type="project" value="UniProtKB-KW"/>
</dbReference>
<dbReference type="GO" id="GO:0005615">
    <property type="term" value="C:extracellular space"/>
    <property type="evidence" value="ECO:0000318"/>
    <property type="project" value="GO_Central"/>
</dbReference>
<dbReference type="GO" id="GO:0004181">
    <property type="term" value="F:metallocarboxypeptidase activity"/>
    <property type="evidence" value="ECO:0000318"/>
    <property type="project" value="GO_Central"/>
</dbReference>
<dbReference type="GO" id="GO:0008270">
    <property type="term" value="F:zinc ion binding"/>
    <property type="evidence" value="ECO:0007669"/>
    <property type="project" value="InterPro"/>
</dbReference>
<dbReference type="GO" id="GO:0006508">
    <property type="term" value="P:proteolysis"/>
    <property type="evidence" value="ECO:0000318"/>
    <property type="project" value="GO_Central"/>
</dbReference>
<dbReference type="CDD" id="cd03871">
    <property type="entry name" value="M14_CPB"/>
    <property type="match status" value="1"/>
</dbReference>
<dbReference type="FunFam" id="3.30.70.340:FF:000002">
    <property type="entry name" value="Carboxypeptidase A"/>
    <property type="match status" value="1"/>
</dbReference>
<dbReference type="FunFam" id="3.40.630.10:FF:000001">
    <property type="entry name" value="Carboxypeptidase B"/>
    <property type="match status" value="1"/>
</dbReference>
<dbReference type="Gene3D" id="3.30.70.340">
    <property type="entry name" value="Metallocarboxypeptidase-like"/>
    <property type="match status" value="1"/>
</dbReference>
<dbReference type="Gene3D" id="3.40.630.10">
    <property type="entry name" value="Zn peptidases"/>
    <property type="match status" value="1"/>
</dbReference>
<dbReference type="InterPro" id="IPR034253">
    <property type="entry name" value="CPB_M14_CPD"/>
</dbReference>
<dbReference type="InterPro" id="IPR036990">
    <property type="entry name" value="M14A-like_propep"/>
</dbReference>
<dbReference type="InterPro" id="IPR003146">
    <property type="entry name" value="M14A_act_pep"/>
</dbReference>
<dbReference type="InterPro" id="IPR000834">
    <property type="entry name" value="Peptidase_M14"/>
</dbReference>
<dbReference type="PANTHER" id="PTHR11705:SF20">
    <property type="entry name" value="CARBOXYPEPTIDASE B"/>
    <property type="match status" value="1"/>
</dbReference>
<dbReference type="PANTHER" id="PTHR11705">
    <property type="entry name" value="PROTEASE FAMILY M14 CARBOXYPEPTIDASE A,B"/>
    <property type="match status" value="1"/>
</dbReference>
<dbReference type="Pfam" id="PF00246">
    <property type="entry name" value="Peptidase_M14"/>
    <property type="match status" value="1"/>
</dbReference>
<dbReference type="Pfam" id="PF02244">
    <property type="entry name" value="Propep_M14"/>
    <property type="match status" value="1"/>
</dbReference>
<dbReference type="PRINTS" id="PR00765">
    <property type="entry name" value="CRBOXYPTASEA"/>
</dbReference>
<dbReference type="SMART" id="SM00631">
    <property type="entry name" value="Zn_pept"/>
    <property type="match status" value="1"/>
</dbReference>
<dbReference type="SUPFAM" id="SSF54897">
    <property type="entry name" value="Protease propeptides/inhibitors"/>
    <property type="match status" value="1"/>
</dbReference>
<dbReference type="SUPFAM" id="SSF53187">
    <property type="entry name" value="Zn-dependent exopeptidases"/>
    <property type="match status" value="1"/>
</dbReference>
<dbReference type="PROSITE" id="PS00132">
    <property type="entry name" value="CARBOXYPEPT_ZN_1"/>
    <property type="match status" value="1"/>
</dbReference>
<dbReference type="PROSITE" id="PS00133">
    <property type="entry name" value="CARBOXYPEPT_ZN_2"/>
    <property type="match status" value="1"/>
</dbReference>
<dbReference type="PROSITE" id="PS52035">
    <property type="entry name" value="PEPTIDASE_M14"/>
    <property type="match status" value="1"/>
</dbReference>
<proteinExistence type="evidence at protein level"/>
<evidence type="ECO:0000250" key="1"/>
<evidence type="ECO:0000250" key="2">
    <source>
        <dbReference type="UniProtKB" id="P00730"/>
    </source>
</evidence>
<evidence type="ECO:0000250" key="3">
    <source>
        <dbReference type="UniProtKB" id="P15086"/>
    </source>
</evidence>
<evidence type="ECO:0000250" key="4">
    <source>
        <dbReference type="UniProtKB" id="P55261"/>
    </source>
</evidence>
<evidence type="ECO:0000255" key="5">
    <source>
        <dbReference type="PROSITE-ProRule" id="PRU01379"/>
    </source>
</evidence>
<evidence type="ECO:0000269" key="6">
    <source>
    </source>
</evidence>
<evidence type="ECO:0000269" key="7">
    <source>
    </source>
</evidence>
<evidence type="ECO:0000269" key="8">
    <source>
    </source>
</evidence>
<evidence type="ECO:0000305" key="9"/>
<evidence type="ECO:0000305" key="10">
    <source>
    </source>
</evidence>
<evidence type="ECO:0000305" key="11">
    <source>
    </source>
</evidence>
<accession>P00732</accession>
<reference key="1">
    <citation type="journal article" date="2009" name="Science">
        <title>The genome sequence of taurine cattle: a window to ruminant biology and evolution.</title>
        <authorList>
            <consortium name="The bovine genome sequencing and analysis consortium"/>
        </authorList>
    </citation>
    <scope>NUCLEOTIDE SEQUENCE [LARGE SCALE GENOMIC DNA]</scope>
    <source>
        <strain>Hereford</strain>
    </source>
</reference>
<reference key="2">
    <citation type="journal article" date="1975" name="Proc. Natl. Acad. Sci. U.S.A.">
        <title>Amino-acid sequence of bovine carboxypeptidase B.</title>
        <authorList>
            <person name="Titani K."/>
            <person name="Ericsson L.H."/>
            <person name="Walsh K.A."/>
            <person name="Neurath H."/>
        </authorList>
    </citation>
    <scope>PROTEIN SEQUENCE OF 111-416</scope>
</reference>
<reference key="3">
    <citation type="journal article" date="1974" name="J. Biol. Chem.">
        <title>Primary structure of bovine carboxypeptidase B. Inferences from the locations of the half-cystines and identification of the active site arginine.</title>
        <authorList>
            <person name="Schmidt J.J."/>
            <person name="Hirs C.H.W."/>
        </authorList>
    </citation>
    <scope>PROTEIN SEQUENCE OF 141-203; 241-291; 373-375 AND 402-416</scope>
</reference>
<reference key="4">
    <citation type="journal article" date="1976" name="J. Mol. Biol.">
        <title>Structure of carboxypeptidase B at 2.8-A resolution.</title>
        <authorList>
            <person name="Schmid M.F."/>
            <person name="Herriott J.R."/>
        </authorList>
    </citation>
    <scope>X-RAY CRYSTALLOGRAPHY (2.8 ANGSTROMS)</scope>
    <scope>DISULFIDE BONDS</scope>
</reference>
<reference key="5">
    <citation type="journal article" date="1969" name="J. Biol. Chem.">
        <title>Isolation and sequence of peptides at the active center of bovine carboxypeptidase B.</title>
        <authorList>
            <person name="Plummer T.H. Jr."/>
        </authorList>
    </citation>
    <scope>CATALYTIC ACTIVITY</scope>
    <scope>SUBCELLULAR LOCATION</scope>
    <scope>SITE</scope>
    <scope>PARTIAL PROTEIN SEQUENCE</scope>
</reference>
<reference key="6">
    <citation type="journal article" date="1972" name="J. Biol. Chem.">
        <title>Identification of a glutamic acid at the active center of bovine carboxypeptidase B.</title>
        <authorList>
            <person name="Kimmel M.T."/>
            <person name="Plummer T.H. Jr."/>
        </authorList>
    </citation>
    <scope>ACTIVE SITE</scope>
    <scope>PARTIAL PROTEIN SEQUENCE</scope>
</reference>
<gene>
    <name type="primary">CPB1</name>
    <name type="synonym">CPB</name>
</gene>
<sequence length="417" mass="47348">MLAFLILVTVTLASAHHSGEHFEGDKVFRVHVEDENHISLLHELASTRQMDFWKPDSVTQVKPHSTVDFRVKAEDTVAVEDFLGQNGLRYEVLISNLRSMLEAQFDSRVRTTGHSYEKYNNWETIEAWTEQVASENPDLISRSAIGTTFLGNTIYLLKVGKPGSNKPAVFMDCGFHAREWISPAFCQWFVREAVRTYGREIHMTEFLDKLDFYVLPVVNIDGYIYTWTTNRMWRKTRSTRAGSSCTGTDLNRNFDAGWCSIGASNNPCSETYCGSAAESEKESKAVADFIRNHLSSIKAYLTIHSYSQMMLYPYSYDYKLPKNNVELNTLAKGAVKKLASLHGTTYTYGPGASTIYPASGGSDDWAYDQGIKYSFTFELRDKGRYGFVLPESQIQPTCEETMLAIKYVTSYVLEHLY</sequence>
<keyword id="KW-0002">3D-structure</keyword>
<keyword id="KW-0121">Carboxypeptidase</keyword>
<keyword id="KW-0968">Cytoplasmic vesicle</keyword>
<keyword id="KW-0903">Direct protein sequencing</keyword>
<keyword id="KW-1015">Disulfide bond</keyword>
<keyword id="KW-0378">Hydrolase</keyword>
<keyword id="KW-0479">Metal-binding</keyword>
<keyword id="KW-0482">Metalloprotease</keyword>
<keyword id="KW-0645">Protease</keyword>
<keyword id="KW-1185">Reference proteome</keyword>
<keyword id="KW-0964">Secreted</keyword>
<keyword id="KW-0732">Signal</keyword>
<keyword id="KW-0862">Zinc</keyword>
<keyword id="KW-0865">Zymogen</keyword>
<feature type="signal peptide" evidence="3">
    <location>
        <begin position="1"/>
        <end position="16"/>
    </location>
</feature>
<feature type="propeptide" id="PRO_0000280813" description="Activation peptide" evidence="1">
    <location>
        <begin position="17"/>
        <end position="110"/>
    </location>
</feature>
<feature type="chain" id="PRO_0000212782" description="Carboxypeptidase B">
    <location>
        <begin position="111"/>
        <end position="417"/>
    </location>
</feature>
<feature type="domain" description="Peptidase M14" evidence="5">
    <location>
        <begin position="118"/>
        <end position="412"/>
    </location>
</feature>
<feature type="active site" description="Proton donor/acceptor" evidence="5 10">
    <location>
        <position position="378"/>
    </location>
</feature>
<feature type="binding site" evidence="2">
    <location>
        <begin position="176"/>
        <end position="179"/>
    </location>
    <ligand>
        <name>substrate</name>
    </ligand>
</feature>
<feature type="binding site" evidence="5">
    <location>
        <position position="176"/>
    </location>
    <ligand>
        <name>Zn(2+)</name>
        <dbReference type="ChEBI" id="CHEBI:29105"/>
        <note>catalytic</note>
    </ligand>
</feature>
<feature type="binding site" evidence="5">
    <location>
        <position position="179"/>
    </location>
    <ligand>
        <name>Zn(2+)</name>
        <dbReference type="ChEBI" id="CHEBI:29105"/>
        <note>catalytic</note>
    </ligand>
</feature>
<feature type="binding site" evidence="2">
    <location>
        <position position="234"/>
    </location>
    <ligand>
        <name>substrate</name>
    </ligand>
</feature>
<feature type="binding site" evidence="2">
    <location>
        <begin position="251"/>
        <end position="252"/>
    </location>
    <ligand>
        <name>substrate</name>
    </ligand>
</feature>
<feature type="binding site" evidence="5">
    <location>
        <position position="304"/>
    </location>
    <ligand>
        <name>Zn(2+)</name>
        <dbReference type="ChEBI" id="CHEBI:29105"/>
        <note>catalytic</note>
    </ligand>
</feature>
<feature type="binding site" evidence="2">
    <location>
        <begin position="305"/>
        <end position="306"/>
    </location>
    <ligand>
        <name>substrate</name>
    </ligand>
</feature>
<feature type="binding site" evidence="2">
    <location>
        <position position="356"/>
    </location>
    <ligand>
        <name>substrate</name>
    </ligand>
</feature>
<feature type="disulfide bond" evidence="6 8">
    <location>
        <begin position="173"/>
        <end position="186"/>
    </location>
</feature>
<feature type="disulfide bond" evidence="6 8">
    <location>
        <begin position="245"/>
        <end position="268"/>
    </location>
</feature>
<feature type="disulfide bond" evidence="6 8">
    <location>
        <begin position="259"/>
        <end position="273"/>
    </location>
</feature>
<feature type="sequence conflict" description="In Ref. 2; AA sequence." evidence="9" ref="2">
    <original>T</original>
    <variation>S</variation>
    <location>
        <position position="347"/>
    </location>
</feature>
<feature type="sequence conflict" description="In Ref. 2; AA sequence." evidence="9" ref="2">
    <original>S</original>
    <variation>T</variation>
    <location>
        <position position="353"/>
    </location>
</feature>
<organism>
    <name type="scientific">Bos taurus</name>
    <name type="common">Bovine</name>
    <dbReference type="NCBI Taxonomy" id="9913"/>
    <lineage>
        <taxon>Eukaryota</taxon>
        <taxon>Metazoa</taxon>
        <taxon>Chordata</taxon>
        <taxon>Craniata</taxon>
        <taxon>Vertebrata</taxon>
        <taxon>Euteleostomi</taxon>
        <taxon>Mammalia</taxon>
        <taxon>Eutheria</taxon>
        <taxon>Laurasiatheria</taxon>
        <taxon>Artiodactyla</taxon>
        <taxon>Ruminantia</taxon>
        <taxon>Pecora</taxon>
        <taxon>Bovidae</taxon>
        <taxon>Bovinae</taxon>
        <taxon>Bos</taxon>
    </lineage>
</organism>
<protein>
    <recommendedName>
        <fullName>Carboxypeptidase B</fullName>
        <ecNumber evidence="7">3.4.17.2</ecNumber>
    </recommendedName>
</protein>
<comment type="catalytic activity">
    <reaction evidence="7">
        <text>Preferential release of a C-terminal lysine or arginine amino acid.</text>
        <dbReference type="EC" id="3.4.17.2"/>
    </reaction>
</comment>
<comment type="cofactor">
    <cofactor evidence="3">
        <name>Zn(2+)</name>
        <dbReference type="ChEBI" id="CHEBI:29105"/>
    </cofactor>
    <text evidence="3">Binds 1 zinc ion per subunit.</text>
</comment>
<comment type="subcellular location">
    <subcellularLocation>
        <location evidence="7">Secreted</location>
    </subcellularLocation>
    <subcellularLocation>
        <location evidence="4">Zymogen granule lumen</location>
    </subcellularLocation>
</comment>
<comment type="miscellaneous">
    <text evidence="10 11">Chemical modification of Tyr-356 leads to loss of enzyme activity (PubMed:5344132). Chemical modification of Glu-378 leads to loss of enzyme activity (PubMed:4565668).</text>
</comment>
<comment type="similarity">
    <text evidence="9">Belongs to the peptidase M14 family.</text>
</comment>
<name>CBPB1_BOVIN</name>